<dbReference type="EC" id="6.5.1.2"/>
<dbReference type="EMBL" id="AY653733">
    <property type="protein sequence ID" value="AAV50575.1"/>
    <property type="molecule type" value="Genomic_DNA"/>
</dbReference>
<dbReference type="SMR" id="Q5UPZ0"/>
<dbReference type="KEGG" id="vg:9924919"/>
<dbReference type="OrthoDB" id="2744at10239"/>
<dbReference type="Proteomes" id="UP000001134">
    <property type="component" value="Genome"/>
</dbReference>
<dbReference type="GO" id="GO:0003911">
    <property type="term" value="F:DNA ligase (NAD+) activity"/>
    <property type="evidence" value="ECO:0007669"/>
    <property type="project" value="UniProtKB-EC"/>
</dbReference>
<dbReference type="GO" id="GO:0000166">
    <property type="term" value="F:nucleotide binding"/>
    <property type="evidence" value="ECO:0007669"/>
    <property type="project" value="InterPro"/>
</dbReference>
<dbReference type="GO" id="GO:0006281">
    <property type="term" value="P:DNA repair"/>
    <property type="evidence" value="ECO:0007669"/>
    <property type="project" value="InterPro"/>
</dbReference>
<dbReference type="GO" id="GO:0006260">
    <property type="term" value="P:DNA replication"/>
    <property type="evidence" value="ECO:0007669"/>
    <property type="project" value="UniProtKB-KW"/>
</dbReference>
<dbReference type="CDD" id="cd17748">
    <property type="entry name" value="BRCT_DNA_ligase_like"/>
    <property type="match status" value="1"/>
</dbReference>
<dbReference type="Gene3D" id="1.10.150.20">
    <property type="entry name" value="5' to 3' exonuclease, C-terminal subdomain"/>
    <property type="match status" value="1"/>
</dbReference>
<dbReference type="Gene3D" id="3.40.50.10190">
    <property type="entry name" value="BRCT domain"/>
    <property type="match status" value="1"/>
</dbReference>
<dbReference type="Gene3D" id="3.30.470.30">
    <property type="entry name" value="DNA ligase/mRNA capping enzyme"/>
    <property type="match status" value="1"/>
</dbReference>
<dbReference type="Gene3D" id="1.10.287.610">
    <property type="entry name" value="Helix hairpin bin"/>
    <property type="match status" value="1"/>
</dbReference>
<dbReference type="Gene3D" id="2.40.50.140">
    <property type="entry name" value="Nucleic acid-binding proteins"/>
    <property type="match status" value="1"/>
</dbReference>
<dbReference type="InterPro" id="IPR001357">
    <property type="entry name" value="BRCT_dom"/>
</dbReference>
<dbReference type="InterPro" id="IPR036420">
    <property type="entry name" value="BRCT_dom_sf"/>
</dbReference>
<dbReference type="InterPro" id="IPR001679">
    <property type="entry name" value="DNA_ligase"/>
</dbReference>
<dbReference type="InterPro" id="IPR010995">
    <property type="entry name" value="DNA_repair_Rad51/TF_NusA_a-hlx"/>
</dbReference>
<dbReference type="InterPro" id="IPR013839">
    <property type="entry name" value="DNAligase_adenylation"/>
</dbReference>
<dbReference type="InterPro" id="IPR013840">
    <property type="entry name" value="DNAligase_N"/>
</dbReference>
<dbReference type="InterPro" id="IPR012340">
    <property type="entry name" value="NA-bd_OB-fold"/>
</dbReference>
<dbReference type="InterPro" id="IPR004150">
    <property type="entry name" value="NAD_DNA_ligase_OB"/>
</dbReference>
<dbReference type="Pfam" id="PF00533">
    <property type="entry name" value="BRCT"/>
    <property type="match status" value="1"/>
</dbReference>
<dbReference type="Pfam" id="PF01653">
    <property type="entry name" value="DNA_ligase_aden"/>
    <property type="match status" value="1"/>
</dbReference>
<dbReference type="Pfam" id="PF03120">
    <property type="entry name" value="DNA_ligase_OB"/>
    <property type="match status" value="1"/>
</dbReference>
<dbReference type="PIRSF" id="PIRSF001604">
    <property type="entry name" value="LigA"/>
    <property type="match status" value="1"/>
</dbReference>
<dbReference type="SMART" id="SM00292">
    <property type="entry name" value="BRCT"/>
    <property type="match status" value="1"/>
</dbReference>
<dbReference type="SMART" id="SM00532">
    <property type="entry name" value="LIGANc"/>
    <property type="match status" value="1"/>
</dbReference>
<dbReference type="SUPFAM" id="SSF52113">
    <property type="entry name" value="BRCT domain"/>
    <property type="match status" value="1"/>
</dbReference>
<dbReference type="SUPFAM" id="SSF56091">
    <property type="entry name" value="DNA ligase/mRNA capping enzyme, catalytic domain"/>
    <property type="match status" value="1"/>
</dbReference>
<dbReference type="SUPFAM" id="SSF50249">
    <property type="entry name" value="Nucleic acid-binding proteins"/>
    <property type="match status" value="1"/>
</dbReference>
<dbReference type="SUPFAM" id="SSF47794">
    <property type="entry name" value="Rad51 N-terminal domain-like"/>
    <property type="match status" value="1"/>
</dbReference>
<dbReference type="PROSITE" id="PS50172">
    <property type="entry name" value="BRCT"/>
    <property type="match status" value="1"/>
</dbReference>
<reference key="1">
    <citation type="journal article" date="2004" name="Science">
        <title>The 1.2-megabase genome sequence of Mimivirus.</title>
        <authorList>
            <person name="Raoult D."/>
            <person name="Audic S."/>
            <person name="Robert C."/>
            <person name="Abergel C."/>
            <person name="Renesto P."/>
            <person name="Ogata H."/>
            <person name="La Scola B."/>
            <person name="Susan M."/>
            <person name="Claverie J.-M."/>
        </authorList>
    </citation>
    <scope>NUCLEOTIDE SEQUENCE [LARGE SCALE GENOMIC DNA]</scope>
    <source>
        <strain>Rowbotham-Bradford</strain>
    </source>
</reference>
<reference key="2">
    <citation type="journal article" date="2006" name="Virology">
        <title>Characterization of mimivirus NAD(+)-dependent DNA ligase.</title>
        <authorList>
            <person name="Benarroch D."/>
            <person name="Shuman S."/>
        </authorList>
    </citation>
    <scope>CHARACTERIZATION</scope>
    <scope>MUTAGENESIS OF TYR-36; ASP-46; TYR-49; ASP-50 AND LYS-113</scope>
    <source>
        <strain>Rowbotham-Bradford</strain>
    </source>
</reference>
<proteinExistence type="evidence at protein level"/>
<feature type="chain" id="PRO_0000161777" description="DNA ligase">
    <location>
        <begin position="1"/>
        <end position="636"/>
    </location>
</feature>
<feature type="domain" description="BRCT" evidence="2">
    <location>
        <begin position="560"/>
        <end position="636"/>
    </location>
</feature>
<feature type="active site" description="N6-AMP-lysine intermediate" evidence="1">
    <location>
        <position position="113"/>
    </location>
</feature>
<feature type="mutagenesis site" description="90% loss of nick sealing activity in vitro. Complete loss of ligase adenylation activity in vitro." evidence="3">
    <original>Y</original>
    <variation>A</variation>
    <location>
        <position position="36"/>
    </location>
</feature>
<feature type="mutagenesis site" description="Complete loss of nick sealing activity in vitro. 98% loss of ligase adenylation activity in vitro." evidence="3">
    <original>D</original>
    <variation>A</variation>
    <location>
        <position position="46"/>
    </location>
</feature>
<feature type="mutagenesis site" description="No effect on nick sealing activity in vitro. 98% loss of ligase adenylation activity in vitro." evidence="3">
    <original>Y</original>
    <variation>A</variation>
    <location>
        <position position="49"/>
    </location>
</feature>
<feature type="mutagenesis site" description="No effect on nick sealing activity in vitro. Complete loss of ligase adenylation activity in vitro." evidence="3">
    <original>D</original>
    <variation>A</variation>
    <location>
        <position position="50"/>
    </location>
</feature>
<feature type="mutagenesis site" description="Complete loss of nick sealing activity in vitro." evidence="3">
    <original>K</original>
    <variation>A</variation>
    <location>
        <position position="113"/>
    </location>
</feature>
<sequence length="636" mass="72089">MDIIKKIKKSKSLWAILPSLNATDIEEALSVSSEYYHNTGTSLISDQEYDILMDRLKELNPSSKIFAQVGAPVKGKKVKLPFWMGSMNKIKADEKAVNKWLNEYSGPYVISDKLDGISCLLTIKNNKTKLYTRGDGTYGQDITHLLGLINIDIGLLEEIDQDIAIRGELIMSKKNFEKYQEIMANARNMVGGIVNSKPESVNKDHAADVDLIFYEVIKPNDKLSRQLKILKEWGLKVVYYNIYKTFDVNILESVLSERKKKSGYEIDGIIVTDNNKHVRNISGNPSYSFAFKGDTPTIDTVVKRVIWTPSKDGVLVPRIKFKKVRLSNVDLEYTTGFNAKYIVDNKIGSGAIINVVRSGDVIPYITHVVKPAKKPDLPNIEYVWDKNGVNIILADINDNETVIIKRLTKFMRNIGAENISEGITTRLVEAGFDTIPKIINMTEEDFLTIDGFQERLAEKIYNNLQNSLDNLDILTLMDASNIFGRGFGTKKFKKILDVYPNIVNQYTKETDNIWRKKLLDIEGFDTITVNKFLGEMPNFQKFYKVINKTITIKPYISEVNSEGIFQNQTVVFTGFRNADWQKFIENEGGKVSGSVSKNTSLLVYNDGEESSAKYQKAKQLGIKTMTKSSFSKKFEK</sequence>
<organismHost>
    <name type="scientific">Acanthamoeba polyphaga</name>
    <name type="common">Amoeba</name>
    <dbReference type="NCBI Taxonomy" id="5757"/>
</organismHost>
<organism>
    <name type="scientific">Acanthamoeba polyphaga mimivirus</name>
    <name type="common">APMV</name>
    <dbReference type="NCBI Taxonomy" id="212035"/>
    <lineage>
        <taxon>Viruses</taxon>
        <taxon>Varidnaviria</taxon>
        <taxon>Bamfordvirae</taxon>
        <taxon>Nucleocytoviricota</taxon>
        <taxon>Megaviricetes</taxon>
        <taxon>Imitervirales</taxon>
        <taxon>Mimiviridae</taxon>
        <taxon>Megamimivirinae</taxon>
        <taxon>Mimivirus</taxon>
        <taxon>Mimivirus bradfordmassiliense</taxon>
    </lineage>
</organism>
<gene>
    <name type="ordered locus">MIMI_R303</name>
</gene>
<keyword id="KW-0235">DNA replication</keyword>
<keyword id="KW-0436">Ligase</keyword>
<keyword id="KW-0520">NAD</keyword>
<keyword id="KW-1185">Reference proteome</keyword>
<accession>Q5UPZ0</accession>
<name>DNLJ_MIMIV</name>
<evidence type="ECO:0000250" key="1"/>
<evidence type="ECO:0000255" key="2">
    <source>
        <dbReference type="PROSITE-ProRule" id="PRU00033"/>
    </source>
</evidence>
<evidence type="ECO:0000269" key="3">
    <source>
    </source>
</evidence>
<evidence type="ECO:0000305" key="4"/>
<protein>
    <recommendedName>
        <fullName>DNA ligase</fullName>
        <ecNumber>6.5.1.2</ecNumber>
    </recommendedName>
    <alternativeName>
        <fullName>NAD-dependent DNA ligase</fullName>
    </alternativeName>
    <alternativeName>
        <fullName>Polydeoxyribonucleotide synthase [NAD(+)]</fullName>
    </alternativeName>
</protein>
<comment type="function">
    <text>Catalyzes the formation of phosphodiester linkages between 5'-phosphoryl and 3'-hydroxyl groups in double-stranded DNA using NAD as a coenzyme and as the energy source for the reaction.</text>
</comment>
<comment type="catalytic activity">
    <reaction>
        <text>NAD(+) + (deoxyribonucleotide)n-3'-hydroxyl + 5'-phospho-(deoxyribonucleotide)m = (deoxyribonucleotide)n+m + AMP + beta-nicotinamide D-nucleotide.</text>
        <dbReference type="EC" id="6.5.1.2"/>
    </reaction>
</comment>
<comment type="similarity">
    <text evidence="4">Belongs to the NAD-dependent DNA ligase family.</text>
</comment>